<reference key="1">
    <citation type="journal article" date="2009" name="Stand. Genomic Sci.">
        <title>Complete genome sequence of Anaerococcus prevotii type strain (PC1).</title>
        <authorList>
            <person name="Labutti K."/>
            <person name="Pukall R."/>
            <person name="Steenblock K."/>
            <person name="Glavina Del Rio T."/>
            <person name="Tice H."/>
            <person name="Copeland A."/>
            <person name="Cheng J.F."/>
            <person name="Lucas S."/>
            <person name="Chen F."/>
            <person name="Nolan M."/>
            <person name="Bruce D."/>
            <person name="Goodwin L."/>
            <person name="Pitluck S."/>
            <person name="Ivanova N."/>
            <person name="Mavromatis K."/>
            <person name="Ovchinnikova G."/>
            <person name="Pati A."/>
            <person name="Chen A."/>
            <person name="Palaniappan K."/>
            <person name="Land M."/>
            <person name="Hauser L."/>
            <person name="Chang Y.J."/>
            <person name="Jeffries C.D."/>
            <person name="Chain P."/>
            <person name="Saunders E."/>
            <person name="Brettin T."/>
            <person name="Detter J.C."/>
            <person name="Han C."/>
            <person name="Goker M."/>
            <person name="Bristow J."/>
            <person name="Eisen J.A."/>
            <person name="Markowitz V."/>
            <person name="Hugenholtz P."/>
            <person name="Kyrpides N.C."/>
            <person name="Klenk H.P."/>
            <person name="Lapidus A."/>
        </authorList>
    </citation>
    <scope>NUCLEOTIDE SEQUENCE [LARGE SCALE GENOMIC DNA]</scope>
    <source>
        <strain>ATCC 9321 / DSM 20548 / JCM 6508 / NCTC 11806 / PC1</strain>
    </source>
</reference>
<gene>
    <name evidence="1" type="primary">nnrE</name>
    <name type="ordered locus">Apre_0539</name>
</gene>
<dbReference type="EC" id="5.1.99.6" evidence="1"/>
<dbReference type="EMBL" id="CP001708">
    <property type="protein sequence ID" value="ACV28585.1"/>
    <property type="molecule type" value="Genomic_DNA"/>
</dbReference>
<dbReference type="RefSeq" id="WP_015777496.1">
    <property type="nucleotide sequence ID" value="NC_013171.1"/>
</dbReference>
<dbReference type="SMR" id="C7RGH4"/>
<dbReference type="STRING" id="525919.Apre_0539"/>
<dbReference type="KEGG" id="apr:Apre_0539"/>
<dbReference type="eggNOG" id="COG0062">
    <property type="taxonomic scope" value="Bacteria"/>
</dbReference>
<dbReference type="HOGENOM" id="CLU_024853_0_1_9"/>
<dbReference type="OrthoDB" id="9806925at2"/>
<dbReference type="Proteomes" id="UP000002294">
    <property type="component" value="Chromosome"/>
</dbReference>
<dbReference type="GO" id="GO:0046872">
    <property type="term" value="F:metal ion binding"/>
    <property type="evidence" value="ECO:0007669"/>
    <property type="project" value="UniProtKB-KW"/>
</dbReference>
<dbReference type="GO" id="GO:0052856">
    <property type="term" value="F:NAD(P)HX epimerase activity"/>
    <property type="evidence" value="ECO:0007669"/>
    <property type="project" value="UniProtKB-UniRule"/>
</dbReference>
<dbReference type="GO" id="GO:0000166">
    <property type="term" value="F:nucleotide binding"/>
    <property type="evidence" value="ECO:0007669"/>
    <property type="project" value="UniProtKB-KW"/>
</dbReference>
<dbReference type="Gene3D" id="3.40.50.10260">
    <property type="entry name" value="YjeF N-terminal domain"/>
    <property type="match status" value="1"/>
</dbReference>
<dbReference type="HAMAP" id="MF_01966">
    <property type="entry name" value="NADHX_epimerase"/>
    <property type="match status" value="1"/>
</dbReference>
<dbReference type="InterPro" id="IPR004443">
    <property type="entry name" value="YjeF_N_dom"/>
</dbReference>
<dbReference type="InterPro" id="IPR036652">
    <property type="entry name" value="YjeF_N_dom_sf"/>
</dbReference>
<dbReference type="InterPro" id="IPR032976">
    <property type="entry name" value="YJEFN_prot_NAXE-like"/>
</dbReference>
<dbReference type="NCBIfam" id="TIGR00197">
    <property type="entry name" value="yjeF_nterm"/>
    <property type="match status" value="1"/>
</dbReference>
<dbReference type="PANTHER" id="PTHR13232">
    <property type="entry name" value="NAD(P)H-HYDRATE EPIMERASE"/>
    <property type="match status" value="1"/>
</dbReference>
<dbReference type="PANTHER" id="PTHR13232:SF10">
    <property type="entry name" value="NAD(P)H-HYDRATE EPIMERASE"/>
    <property type="match status" value="1"/>
</dbReference>
<dbReference type="Pfam" id="PF03853">
    <property type="entry name" value="YjeF_N"/>
    <property type="match status" value="1"/>
</dbReference>
<dbReference type="SUPFAM" id="SSF64153">
    <property type="entry name" value="YjeF N-terminal domain-like"/>
    <property type="match status" value="1"/>
</dbReference>
<dbReference type="PROSITE" id="PS51385">
    <property type="entry name" value="YJEF_N"/>
    <property type="match status" value="1"/>
</dbReference>
<keyword id="KW-0413">Isomerase</keyword>
<keyword id="KW-0479">Metal-binding</keyword>
<keyword id="KW-0520">NAD</keyword>
<keyword id="KW-0521">NADP</keyword>
<keyword id="KW-0547">Nucleotide-binding</keyword>
<keyword id="KW-0630">Potassium</keyword>
<name>NNRE_ANAPD</name>
<sequence length="218" mass="24133">MLVVDSKTMKKIDQYAIDVLKVPSICLVERAALAVIKNINLEKRTSFAIVVGVGNNGADGLAIARNLLAMGKYVEIYIVGDLTKQSQDFKLNLDSCKRLTDKIFEPKSIEDLAIMERNLEEVSTIIDAIFGTGLNRTVGGMQSYMISLINRTMKYTISVDIPSGLDGDSGRNWGEVVDSDLIISMQIMKRGVYEKSHFKDKCIVEDIGIPQKAIRAIL</sequence>
<protein>
    <recommendedName>
        <fullName evidence="1">NAD(P)H-hydrate epimerase</fullName>
        <ecNumber evidence="1">5.1.99.6</ecNumber>
    </recommendedName>
    <alternativeName>
        <fullName evidence="1">NAD(P)HX epimerase</fullName>
    </alternativeName>
</protein>
<organism>
    <name type="scientific">Anaerococcus prevotii (strain ATCC 9321 / DSM 20548 / JCM 6508 / NCTC 11806 / PC1)</name>
    <name type="common">Peptostreptococcus prevotii</name>
    <name type="synonym">Peptococcus prevotii</name>
    <dbReference type="NCBI Taxonomy" id="525919"/>
    <lineage>
        <taxon>Bacteria</taxon>
        <taxon>Bacillati</taxon>
        <taxon>Bacillota</taxon>
        <taxon>Tissierellia</taxon>
        <taxon>Tissierellales</taxon>
        <taxon>Peptoniphilaceae</taxon>
        <taxon>Anaerococcus</taxon>
    </lineage>
</organism>
<feature type="chain" id="PRO_0000416343" description="NAD(P)H-hydrate epimerase">
    <location>
        <begin position="1"/>
        <end position="218"/>
    </location>
</feature>
<feature type="domain" description="YjeF N-terminal" evidence="1">
    <location>
        <begin position="9"/>
        <end position="215"/>
    </location>
</feature>
<feature type="binding site" evidence="1">
    <location>
        <begin position="55"/>
        <end position="59"/>
    </location>
    <ligand>
        <name>(6S)-NADPHX</name>
        <dbReference type="ChEBI" id="CHEBI:64076"/>
    </ligand>
</feature>
<feature type="binding site" evidence="1">
    <location>
        <position position="56"/>
    </location>
    <ligand>
        <name>K(+)</name>
        <dbReference type="ChEBI" id="CHEBI:29103"/>
    </ligand>
</feature>
<feature type="binding site" evidence="1">
    <location>
        <position position="127"/>
    </location>
    <ligand>
        <name>K(+)</name>
        <dbReference type="ChEBI" id="CHEBI:29103"/>
    </ligand>
</feature>
<feature type="binding site" evidence="1">
    <location>
        <begin position="131"/>
        <end position="137"/>
    </location>
    <ligand>
        <name>(6S)-NADPHX</name>
        <dbReference type="ChEBI" id="CHEBI:64076"/>
    </ligand>
</feature>
<feature type="binding site" evidence="1">
    <location>
        <position position="160"/>
    </location>
    <ligand>
        <name>(6S)-NADPHX</name>
        <dbReference type="ChEBI" id="CHEBI:64076"/>
    </ligand>
</feature>
<feature type="binding site" evidence="1">
    <location>
        <position position="163"/>
    </location>
    <ligand>
        <name>K(+)</name>
        <dbReference type="ChEBI" id="CHEBI:29103"/>
    </ligand>
</feature>
<comment type="function">
    <text evidence="1">Catalyzes the epimerization of the S- and R-forms of NAD(P)HX, a damaged form of NAD(P)H that is a result of enzymatic or heat-dependent hydration. This is a prerequisite for the S-specific NAD(P)H-hydrate dehydratase to allow the repair of both epimers of NAD(P)HX.</text>
</comment>
<comment type="catalytic activity">
    <reaction evidence="1">
        <text>(6R)-NADHX = (6S)-NADHX</text>
        <dbReference type="Rhea" id="RHEA:32215"/>
        <dbReference type="ChEBI" id="CHEBI:64074"/>
        <dbReference type="ChEBI" id="CHEBI:64075"/>
        <dbReference type="EC" id="5.1.99.6"/>
    </reaction>
</comment>
<comment type="catalytic activity">
    <reaction evidence="1">
        <text>(6R)-NADPHX = (6S)-NADPHX</text>
        <dbReference type="Rhea" id="RHEA:32227"/>
        <dbReference type="ChEBI" id="CHEBI:64076"/>
        <dbReference type="ChEBI" id="CHEBI:64077"/>
        <dbReference type="EC" id="5.1.99.6"/>
    </reaction>
</comment>
<comment type="cofactor">
    <cofactor evidence="1">
        <name>K(+)</name>
        <dbReference type="ChEBI" id="CHEBI:29103"/>
    </cofactor>
    <text evidence="1">Binds 1 potassium ion per subunit.</text>
</comment>
<comment type="similarity">
    <text evidence="1">Belongs to the NnrE/AIBP family.</text>
</comment>
<evidence type="ECO:0000255" key="1">
    <source>
        <dbReference type="HAMAP-Rule" id="MF_01966"/>
    </source>
</evidence>
<accession>C7RGH4</accession>
<proteinExistence type="inferred from homology"/>